<dbReference type="EMBL" id="AE017223">
    <property type="protein sequence ID" value="AAX74554.1"/>
    <property type="molecule type" value="Genomic_DNA"/>
</dbReference>
<dbReference type="RefSeq" id="WP_002964340.1">
    <property type="nucleotide sequence ID" value="NC_006932.1"/>
</dbReference>
<dbReference type="SMR" id="Q57CT0"/>
<dbReference type="EnsemblBacteria" id="AAX74554">
    <property type="protein sequence ID" value="AAX74554"/>
    <property type="gene ID" value="BruAb1_1216"/>
</dbReference>
<dbReference type="GeneID" id="97533546"/>
<dbReference type="KEGG" id="bmb:BruAb1_1216"/>
<dbReference type="HOGENOM" id="CLU_103849_1_2_5"/>
<dbReference type="Proteomes" id="UP000000540">
    <property type="component" value="Chromosome I"/>
</dbReference>
<dbReference type="GO" id="GO:0005829">
    <property type="term" value="C:cytosol"/>
    <property type="evidence" value="ECO:0007669"/>
    <property type="project" value="TreeGrafter"/>
</dbReference>
<dbReference type="GO" id="GO:0015935">
    <property type="term" value="C:small ribosomal subunit"/>
    <property type="evidence" value="ECO:0007669"/>
    <property type="project" value="TreeGrafter"/>
</dbReference>
<dbReference type="GO" id="GO:0019843">
    <property type="term" value="F:rRNA binding"/>
    <property type="evidence" value="ECO:0007669"/>
    <property type="project" value="UniProtKB-UniRule"/>
</dbReference>
<dbReference type="GO" id="GO:0003735">
    <property type="term" value="F:structural constituent of ribosome"/>
    <property type="evidence" value="ECO:0007669"/>
    <property type="project" value="InterPro"/>
</dbReference>
<dbReference type="GO" id="GO:0000049">
    <property type="term" value="F:tRNA binding"/>
    <property type="evidence" value="ECO:0007669"/>
    <property type="project" value="UniProtKB-UniRule"/>
</dbReference>
<dbReference type="GO" id="GO:0006412">
    <property type="term" value="P:translation"/>
    <property type="evidence" value="ECO:0007669"/>
    <property type="project" value="UniProtKB-UniRule"/>
</dbReference>
<dbReference type="FunFam" id="1.10.8.50:FF:000001">
    <property type="entry name" value="30S ribosomal protein S13"/>
    <property type="match status" value="1"/>
</dbReference>
<dbReference type="FunFam" id="4.10.910.10:FF:000001">
    <property type="entry name" value="30S ribosomal protein S13"/>
    <property type="match status" value="1"/>
</dbReference>
<dbReference type="Gene3D" id="1.10.8.50">
    <property type="match status" value="1"/>
</dbReference>
<dbReference type="Gene3D" id="4.10.910.10">
    <property type="entry name" value="30s ribosomal protein s13, domain 2"/>
    <property type="match status" value="1"/>
</dbReference>
<dbReference type="HAMAP" id="MF_01315">
    <property type="entry name" value="Ribosomal_uS13"/>
    <property type="match status" value="1"/>
</dbReference>
<dbReference type="InterPro" id="IPR027437">
    <property type="entry name" value="Rbsml_uS13_C"/>
</dbReference>
<dbReference type="InterPro" id="IPR001892">
    <property type="entry name" value="Ribosomal_uS13"/>
</dbReference>
<dbReference type="InterPro" id="IPR010979">
    <property type="entry name" value="Ribosomal_uS13-like_H2TH"/>
</dbReference>
<dbReference type="InterPro" id="IPR019980">
    <property type="entry name" value="Ribosomal_uS13_bac-type"/>
</dbReference>
<dbReference type="InterPro" id="IPR018269">
    <property type="entry name" value="Ribosomal_uS13_CS"/>
</dbReference>
<dbReference type="NCBIfam" id="TIGR03631">
    <property type="entry name" value="uS13_bact"/>
    <property type="match status" value="1"/>
</dbReference>
<dbReference type="PANTHER" id="PTHR10871">
    <property type="entry name" value="30S RIBOSOMAL PROTEIN S13/40S RIBOSOMAL PROTEIN S18"/>
    <property type="match status" value="1"/>
</dbReference>
<dbReference type="PANTHER" id="PTHR10871:SF1">
    <property type="entry name" value="SMALL RIBOSOMAL SUBUNIT PROTEIN US13M"/>
    <property type="match status" value="1"/>
</dbReference>
<dbReference type="Pfam" id="PF00416">
    <property type="entry name" value="Ribosomal_S13"/>
    <property type="match status" value="1"/>
</dbReference>
<dbReference type="PIRSF" id="PIRSF002134">
    <property type="entry name" value="Ribosomal_S13"/>
    <property type="match status" value="1"/>
</dbReference>
<dbReference type="SUPFAM" id="SSF46946">
    <property type="entry name" value="S13-like H2TH domain"/>
    <property type="match status" value="1"/>
</dbReference>
<dbReference type="PROSITE" id="PS00646">
    <property type="entry name" value="RIBOSOMAL_S13_1"/>
    <property type="match status" value="1"/>
</dbReference>
<dbReference type="PROSITE" id="PS50159">
    <property type="entry name" value="RIBOSOMAL_S13_2"/>
    <property type="match status" value="1"/>
</dbReference>
<comment type="function">
    <text evidence="1">Located at the top of the head of the 30S subunit, it contacts several helices of the 16S rRNA. In the 70S ribosome it contacts the 23S rRNA (bridge B1a) and protein L5 of the 50S subunit (bridge B1b), connecting the 2 subunits; these bridges are implicated in subunit movement. Contacts the tRNAs in the A and P-sites.</text>
</comment>
<comment type="subunit">
    <text evidence="1">Part of the 30S ribosomal subunit. Forms a loose heterodimer with protein S19. Forms two bridges to the 50S subunit in the 70S ribosome.</text>
</comment>
<comment type="similarity">
    <text evidence="1">Belongs to the universal ribosomal protein uS13 family.</text>
</comment>
<gene>
    <name evidence="1" type="primary">rpsM</name>
    <name type="ordered locus">BruAb1_1216</name>
</gene>
<accession>Q57CT0</accession>
<feature type="chain" id="PRO_0000230482" description="Small ribosomal subunit protein uS13">
    <location>
        <begin position="1"/>
        <end position="122"/>
    </location>
</feature>
<feature type="region of interest" description="Disordered" evidence="2">
    <location>
        <begin position="97"/>
        <end position="122"/>
    </location>
</feature>
<reference key="1">
    <citation type="journal article" date="2005" name="J. Bacteriol.">
        <title>Completion of the genome sequence of Brucella abortus and comparison to the highly similar genomes of Brucella melitensis and Brucella suis.</title>
        <authorList>
            <person name="Halling S.M."/>
            <person name="Peterson-Burch B.D."/>
            <person name="Bricker B.J."/>
            <person name="Zuerner R.L."/>
            <person name="Qing Z."/>
            <person name="Li L.-L."/>
            <person name="Kapur V."/>
            <person name="Alt D.P."/>
            <person name="Olsen S.C."/>
        </authorList>
    </citation>
    <scope>NUCLEOTIDE SEQUENCE [LARGE SCALE GENOMIC DNA]</scope>
    <source>
        <strain>9-941</strain>
    </source>
</reference>
<proteinExistence type="inferred from homology"/>
<protein>
    <recommendedName>
        <fullName evidence="1">Small ribosomal subunit protein uS13</fullName>
    </recommendedName>
    <alternativeName>
        <fullName evidence="3">30S ribosomal protein S13</fullName>
    </alternativeName>
</protein>
<evidence type="ECO:0000255" key="1">
    <source>
        <dbReference type="HAMAP-Rule" id="MF_01315"/>
    </source>
</evidence>
<evidence type="ECO:0000256" key="2">
    <source>
        <dbReference type="SAM" id="MobiDB-lite"/>
    </source>
</evidence>
<evidence type="ECO:0000305" key="3"/>
<sequence>MARIAGVNIPTNKRVNIALQYIHGIGPKFAREIVTKVGIADDRRVNQLSDAEVLQIREAIDADYQVEGDLRREVSMNIKRLMDLGCYRGLRHRRSLPVRGQRTHTNARTRKGPAKAIAGKKK</sequence>
<name>RS13_BRUAB</name>
<organism>
    <name type="scientific">Brucella abortus biovar 1 (strain 9-941)</name>
    <dbReference type="NCBI Taxonomy" id="262698"/>
    <lineage>
        <taxon>Bacteria</taxon>
        <taxon>Pseudomonadati</taxon>
        <taxon>Pseudomonadota</taxon>
        <taxon>Alphaproteobacteria</taxon>
        <taxon>Hyphomicrobiales</taxon>
        <taxon>Brucellaceae</taxon>
        <taxon>Brucella/Ochrobactrum group</taxon>
        <taxon>Brucella</taxon>
    </lineage>
</organism>
<keyword id="KW-0687">Ribonucleoprotein</keyword>
<keyword id="KW-0689">Ribosomal protein</keyword>
<keyword id="KW-0694">RNA-binding</keyword>
<keyword id="KW-0699">rRNA-binding</keyword>
<keyword id="KW-0820">tRNA-binding</keyword>